<proteinExistence type="inferred from homology"/>
<keyword id="KW-0119">Carbohydrate metabolism</keyword>
<keyword id="KW-1003">Cell membrane</keyword>
<keyword id="KW-0328">Glycosyltransferase</keyword>
<keyword id="KW-0444">Lipid biosynthesis</keyword>
<keyword id="KW-0443">Lipid metabolism</keyword>
<keyword id="KW-0472">Membrane</keyword>
<keyword id="KW-1185">Reference proteome</keyword>
<keyword id="KW-0808">Transferase</keyword>
<accession>B9DQ98</accession>
<organism>
    <name type="scientific">Staphylococcus carnosus (strain TM300)</name>
    <dbReference type="NCBI Taxonomy" id="396513"/>
    <lineage>
        <taxon>Bacteria</taxon>
        <taxon>Bacillati</taxon>
        <taxon>Bacillota</taxon>
        <taxon>Bacilli</taxon>
        <taxon>Bacillales</taxon>
        <taxon>Staphylococcaceae</taxon>
        <taxon>Staphylococcus</taxon>
    </lineage>
</organism>
<name>UGTP_STACT</name>
<evidence type="ECO:0000255" key="1">
    <source>
        <dbReference type="HAMAP-Rule" id="MF_01280"/>
    </source>
</evidence>
<reference key="1">
    <citation type="journal article" date="2009" name="Appl. Environ. Microbiol.">
        <title>Genome analysis of the meat starter culture bacterium Staphylococcus carnosus TM300.</title>
        <authorList>
            <person name="Rosenstein R."/>
            <person name="Nerz C."/>
            <person name="Biswas L."/>
            <person name="Resch A."/>
            <person name="Raddatz G."/>
            <person name="Schuster S.C."/>
            <person name="Goetz F."/>
        </authorList>
    </citation>
    <scope>NUCLEOTIDE SEQUENCE [LARGE SCALE GENOMIC DNA]</scope>
    <source>
        <strain>TM300</strain>
    </source>
</reference>
<dbReference type="EC" id="2.4.1.315"/>
<dbReference type="EMBL" id="AM295250">
    <property type="protein sequence ID" value="CAL27533.1"/>
    <property type="molecule type" value="Genomic_DNA"/>
</dbReference>
<dbReference type="RefSeq" id="WP_015899876.1">
    <property type="nucleotide sequence ID" value="NC_012121.1"/>
</dbReference>
<dbReference type="SMR" id="B9DQ98"/>
<dbReference type="CAZy" id="GT28">
    <property type="family name" value="Glycosyltransferase Family 28"/>
</dbReference>
<dbReference type="GeneID" id="93795557"/>
<dbReference type="KEGG" id="sca:SCA_0619"/>
<dbReference type="eggNOG" id="COG0707">
    <property type="taxonomic scope" value="Bacteria"/>
</dbReference>
<dbReference type="HOGENOM" id="CLU_028367_0_1_9"/>
<dbReference type="OrthoDB" id="9815663at2"/>
<dbReference type="BioCyc" id="SCAR396513:SCA_RS03150-MONOMER"/>
<dbReference type="UniPathway" id="UPA00894"/>
<dbReference type="Proteomes" id="UP000000444">
    <property type="component" value="Chromosome"/>
</dbReference>
<dbReference type="GO" id="GO:0005886">
    <property type="term" value="C:plasma membrane"/>
    <property type="evidence" value="ECO:0007669"/>
    <property type="project" value="UniProtKB-SubCell"/>
</dbReference>
<dbReference type="GO" id="GO:0047228">
    <property type="term" value="F:1,2-diacylglycerol 3-glucosyltransferase activity"/>
    <property type="evidence" value="ECO:0007669"/>
    <property type="project" value="UniProtKB-UniRule"/>
</dbReference>
<dbReference type="GO" id="GO:0009246">
    <property type="term" value="P:enterobacterial common antigen biosynthetic process"/>
    <property type="evidence" value="ECO:0007669"/>
    <property type="project" value="UniProtKB-UniPathway"/>
</dbReference>
<dbReference type="GO" id="GO:0009247">
    <property type="term" value="P:glycolipid biosynthetic process"/>
    <property type="evidence" value="ECO:0007669"/>
    <property type="project" value="UniProtKB-UniRule"/>
</dbReference>
<dbReference type="GO" id="GO:0070395">
    <property type="term" value="P:lipoteichoic acid biosynthetic process"/>
    <property type="evidence" value="ECO:0007669"/>
    <property type="project" value="UniProtKB-UniRule"/>
</dbReference>
<dbReference type="CDD" id="cd17507">
    <property type="entry name" value="GT28_Beta-DGS-like"/>
    <property type="match status" value="1"/>
</dbReference>
<dbReference type="Gene3D" id="3.40.50.2000">
    <property type="entry name" value="Glycogen Phosphorylase B"/>
    <property type="match status" value="2"/>
</dbReference>
<dbReference type="HAMAP" id="MF_01280">
    <property type="entry name" value="Diacylglyc_glucosyltr"/>
    <property type="match status" value="1"/>
</dbReference>
<dbReference type="InterPro" id="IPR009695">
    <property type="entry name" value="Diacylglyc_glucosyltr_N"/>
</dbReference>
<dbReference type="InterPro" id="IPR007235">
    <property type="entry name" value="Glyco_trans_28_C"/>
</dbReference>
<dbReference type="InterPro" id="IPR050519">
    <property type="entry name" value="Glycosyltransf_28_UgtP"/>
</dbReference>
<dbReference type="InterPro" id="IPR023589">
    <property type="entry name" value="Pro_diacylglycrl_glcsylTrfase"/>
</dbReference>
<dbReference type="NCBIfam" id="NF010134">
    <property type="entry name" value="PRK13608.1"/>
    <property type="match status" value="1"/>
</dbReference>
<dbReference type="PANTHER" id="PTHR43025">
    <property type="entry name" value="MONOGALACTOSYLDIACYLGLYCEROL SYNTHASE"/>
    <property type="match status" value="1"/>
</dbReference>
<dbReference type="PANTHER" id="PTHR43025:SF3">
    <property type="entry name" value="MONOGALACTOSYLDIACYLGLYCEROL SYNTHASE 1, CHLOROPLASTIC"/>
    <property type="match status" value="1"/>
</dbReference>
<dbReference type="Pfam" id="PF04101">
    <property type="entry name" value="Glyco_tran_28_C"/>
    <property type="match status" value="1"/>
</dbReference>
<dbReference type="Pfam" id="PF06925">
    <property type="entry name" value="MGDG_synth"/>
    <property type="match status" value="1"/>
</dbReference>
<dbReference type="SUPFAM" id="SSF53756">
    <property type="entry name" value="UDP-Glycosyltransferase/glycogen phosphorylase"/>
    <property type="match status" value="1"/>
</dbReference>
<feature type="chain" id="PRO_1000165235" description="Processive diacylglycerol beta-glucosyltransferase">
    <location>
        <begin position="1"/>
        <end position="391"/>
    </location>
</feature>
<comment type="function">
    <text evidence="1">Processive glucosyltransferase involved in the biosynthesis of both the bilayer- and non-bilayer-forming membrane glucolipids. Is able to successively transfer two glucosyl residues to diacylglycerol (DAG), thereby catalyzing the formation of beta-monoglucosyl-DAG (3-O-(beta-D-glucopyranosyl)-1,2-diacyl-sn-glycerol) and beta-diglucosyl-DAG (3-O-(beta-D-glucopyranosyl-beta-(1-&gt;6)-D-glucopyranosyl)-1,2-diacyl-sn-glycerol). Beta-diglucosyl-DAG is the predominant glycolipid found in Bacillales and is also used as a membrane anchor for lipoteichoic acid (LTA).</text>
</comment>
<comment type="catalytic activity">
    <reaction>
        <text>a 1,2-diacyl-3-O-(beta-D-glucopyranosyl)-sn-glycerol + UDP-alpha-D-glucose = a 1,2-diacyl-3-O-(beta-D-Glc-(1-&gt;6)-beta-D-Glc)-sn-glycerol + UDP + H(+)</text>
        <dbReference type="Rhea" id="RHEA:39031"/>
        <dbReference type="ChEBI" id="CHEBI:15378"/>
        <dbReference type="ChEBI" id="CHEBI:58223"/>
        <dbReference type="ChEBI" id="CHEBI:58885"/>
        <dbReference type="ChEBI" id="CHEBI:75799"/>
        <dbReference type="ChEBI" id="CHEBI:76264"/>
        <dbReference type="EC" id="2.4.1.315"/>
    </reaction>
</comment>
<comment type="catalytic activity">
    <reaction evidence="1">
        <text>a 1,2-diacyl-sn-glycerol + UDP-alpha-D-glucose = a 1,2-diacyl-3-O-(beta-D-glucopyranosyl)-sn-glycerol + UDP + H(+)</text>
        <dbReference type="Rhea" id="RHEA:17285"/>
        <dbReference type="ChEBI" id="CHEBI:15378"/>
        <dbReference type="ChEBI" id="CHEBI:17815"/>
        <dbReference type="ChEBI" id="CHEBI:58223"/>
        <dbReference type="ChEBI" id="CHEBI:58885"/>
        <dbReference type="ChEBI" id="CHEBI:75799"/>
    </reaction>
</comment>
<comment type="pathway">
    <text evidence="1">Glycolipid metabolism; diglucosyl-diacylglycerol biosynthesis.</text>
</comment>
<comment type="subcellular location">
    <subcellularLocation>
        <location evidence="1">Cell membrane</location>
    </subcellularLocation>
</comment>
<comment type="similarity">
    <text evidence="1">Belongs to the glycosyltransferase 28 family. UgtP subfamily.</text>
</comment>
<protein>
    <recommendedName>
        <fullName evidence="1">Processive diacylglycerol beta-glucosyltransferase</fullName>
        <ecNumber>2.4.1.315</ecNumber>
    </recommendedName>
    <alternativeName>
        <fullName evidence="1">Beta-diglucosyldiacylglycerol synthase</fullName>
        <shortName evidence="1">Beta-DGS</shortName>
        <shortName evidence="1">DGlcDAG synthase</shortName>
        <shortName evidence="1">Glc2-DAG synthase</shortName>
    </alternativeName>
    <alternativeName>
        <fullName evidence="1">Beta-gentiobiosyldiacylglycerol synthase</fullName>
    </alternativeName>
    <alternativeName>
        <fullName evidence="1">Beta-monoglucosyldiacylglycerol synthase</fullName>
        <shortName evidence="1">Beta-MGS</shortName>
        <shortName evidence="1">MGlcDAG synthase</shortName>
    </alternativeName>
    <alternativeName>
        <fullName>Diglucosyl diacylglycerol synthase (1,6-linking)</fullName>
    </alternativeName>
    <alternativeName>
        <fullName evidence="1">Glucosyl-beta-1,6-glucosyldiacylglycerol synthase</fullName>
    </alternativeName>
    <alternativeName>
        <fullName evidence="1">UDP glucosyltransferase</fullName>
    </alternativeName>
    <alternativeName>
        <fullName evidence="1">UDP-glucose:1,2-diacylglycerol-3-beta-D-glucosyltransferase</fullName>
    </alternativeName>
</protein>
<sequence>MVTQNKKILIITGSFGNGHLQVTNSVVNQLNEMNLKHLSVIEHDLFMEAHPILTSICKKYYINSFKYFRNSYKQFYYSRPEDVNKCFYKYYGLNKLINLLIKEKPDLILLTFPTPVMSVLTEQFNMNIPIATVMTDYRLHKNWVTPHSSRYYVATPDLKQEFVNVGVPEDIIKITGIPISEQFDEDIDTKVWMHKNHLDPNRPTILMSAGAFGVSKGFDVMISDILERSPETQIVMICGRNKELKRALRQQFKEYANVLILGYTHHMNEWMASSHLMVTKPGGITISEALARKIPMIFLDPAPGQELENAHYFQSKGMGKIADTTEEAIQLITELTQDENALAHMAEQMQDLKVKYPTYKLCRDLLHLLDHSSQFEEIYGKVPMYAKLFIK</sequence>
<gene>
    <name evidence="1" type="primary">ugtP</name>
    <name type="ordered locus">Sca_0619</name>
</gene>